<protein>
    <recommendedName>
        <fullName evidence="1">Small ribosomal subunit protein bS21</fullName>
    </recommendedName>
    <alternativeName>
        <fullName evidence="2">30S ribosomal protein S21</fullName>
    </alternativeName>
</protein>
<comment type="similarity">
    <text evidence="1">Belongs to the bacterial ribosomal protein bS21 family.</text>
</comment>
<evidence type="ECO:0000255" key="1">
    <source>
        <dbReference type="HAMAP-Rule" id="MF_00358"/>
    </source>
</evidence>
<evidence type="ECO:0000305" key="2"/>
<organism>
    <name type="scientific">Coxiella burnetii (strain RSA 331 / Henzerling II)</name>
    <dbReference type="NCBI Taxonomy" id="360115"/>
    <lineage>
        <taxon>Bacteria</taxon>
        <taxon>Pseudomonadati</taxon>
        <taxon>Pseudomonadota</taxon>
        <taxon>Gammaproteobacteria</taxon>
        <taxon>Legionellales</taxon>
        <taxon>Coxiellaceae</taxon>
        <taxon>Coxiella</taxon>
    </lineage>
</organism>
<keyword id="KW-0687">Ribonucleoprotein</keyword>
<keyword id="KW-0689">Ribosomal protein</keyword>
<proteinExistence type="inferred from homology"/>
<dbReference type="EMBL" id="CP000890">
    <property type="protein sequence ID" value="ABX77417.1"/>
    <property type="molecule type" value="Genomic_DNA"/>
</dbReference>
<dbReference type="RefSeq" id="WP_005772127.1">
    <property type="nucleotide sequence ID" value="NC_010117.1"/>
</dbReference>
<dbReference type="SMR" id="A9N9M4"/>
<dbReference type="KEGG" id="cbs:COXBURSA331_A1781"/>
<dbReference type="HOGENOM" id="CLU_159258_1_1_6"/>
<dbReference type="GO" id="GO:1990904">
    <property type="term" value="C:ribonucleoprotein complex"/>
    <property type="evidence" value="ECO:0007669"/>
    <property type="project" value="UniProtKB-KW"/>
</dbReference>
<dbReference type="GO" id="GO:0005840">
    <property type="term" value="C:ribosome"/>
    <property type="evidence" value="ECO:0007669"/>
    <property type="project" value="UniProtKB-KW"/>
</dbReference>
<dbReference type="GO" id="GO:0003735">
    <property type="term" value="F:structural constituent of ribosome"/>
    <property type="evidence" value="ECO:0007669"/>
    <property type="project" value="InterPro"/>
</dbReference>
<dbReference type="GO" id="GO:0006412">
    <property type="term" value="P:translation"/>
    <property type="evidence" value="ECO:0007669"/>
    <property type="project" value="UniProtKB-UniRule"/>
</dbReference>
<dbReference type="Gene3D" id="1.20.5.1150">
    <property type="entry name" value="Ribosomal protein S8"/>
    <property type="match status" value="1"/>
</dbReference>
<dbReference type="HAMAP" id="MF_00358">
    <property type="entry name" value="Ribosomal_bS21"/>
    <property type="match status" value="1"/>
</dbReference>
<dbReference type="InterPro" id="IPR001911">
    <property type="entry name" value="Ribosomal_bS21"/>
</dbReference>
<dbReference type="InterPro" id="IPR038380">
    <property type="entry name" value="Ribosomal_bS21_sf"/>
</dbReference>
<dbReference type="NCBIfam" id="TIGR00030">
    <property type="entry name" value="S21p"/>
    <property type="match status" value="1"/>
</dbReference>
<dbReference type="PANTHER" id="PTHR21109">
    <property type="entry name" value="MITOCHONDRIAL 28S RIBOSOMAL PROTEIN S21"/>
    <property type="match status" value="1"/>
</dbReference>
<dbReference type="PANTHER" id="PTHR21109:SF22">
    <property type="entry name" value="SMALL RIBOSOMAL SUBUNIT PROTEIN BS21"/>
    <property type="match status" value="1"/>
</dbReference>
<dbReference type="Pfam" id="PF01165">
    <property type="entry name" value="Ribosomal_S21"/>
    <property type="match status" value="1"/>
</dbReference>
<dbReference type="PRINTS" id="PR00976">
    <property type="entry name" value="RIBOSOMALS21"/>
</dbReference>
<sequence length="74" mass="8905">MPMIDVPDNNAFDVAMRRFKRACEKAGILSKLRQIEYYEKPTSKRKRKRAAAVKRYAKKLQKEQEALERERTRY</sequence>
<name>RS21_COXBR</name>
<reference key="1">
    <citation type="submission" date="2007-11" db="EMBL/GenBank/DDBJ databases">
        <title>Genome sequencing of phylogenetically and phenotypically diverse Coxiella burnetii isolates.</title>
        <authorList>
            <person name="Seshadri R."/>
            <person name="Samuel J.E."/>
        </authorList>
    </citation>
    <scope>NUCLEOTIDE SEQUENCE [LARGE SCALE GENOMIC DNA]</scope>
    <source>
        <strain>RSA 331 / Henzerling II</strain>
    </source>
</reference>
<gene>
    <name evidence="1" type="primary">rpsU</name>
    <name type="ordered locus">COXBURSA331_A1781</name>
</gene>
<accession>A9N9M4</accession>
<feature type="chain" id="PRO_1000079403" description="Small ribosomal subunit protein bS21">
    <location>
        <begin position="1"/>
        <end position="74"/>
    </location>
</feature>